<feature type="peptide" id="PRO_0000395656" description="Tachykinin-related peptide 1" evidence="1">
    <location>
        <begin position="1"/>
        <end position="9"/>
    </location>
</feature>
<feature type="modified residue" description="Arginine amide" evidence="1">
    <location>
        <position position="9"/>
    </location>
</feature>
<protein>
    <recommendedName>
        <fullName evidence="2">Tachykinin-related peptide 1</fullName>
        <shortName evidence="2">TKRP-1</shortName>
    </recommendedName>
</protein>
<accession>P86587</accession>
<sequence length="9" mass="921">GPSGFLGMR</sequence>
<evidence type="ECO:0000269" key="1">
    <source>
    </source>
</evidence>
<evidence type="ECO:0000303" key="2">
    <source>
    </source>
</evidence>
<evidence type="ECO:0000305" key="3"/>
<reference evidence="3" key="1">
    <citation type="journal article" date="2009" name="Peptides">
        <title>Neuropeptides in Heteroptera: identification of allatotropin-related peptide and tachykinin-related peptides using MALDI-TOF mass spectrometry.</title>
        <authorList>
            <person name="Neupert S."/>
            <person name="Russell W.K."/>
            <person name="Russell D.H."/>
            <person name="Lopez J.D. Jr."/>
            <person name="Predel R."/>
            <person name="Nachman R.J."/>
        </authorList>
    </citation>
    <scope>PROTEIN SEQUENCE</scope>
    <scope>SUBCELLULAR LOCATION</scope>
    <scope>TISSUE SPECIFICITY</scope>
    <scope>AMIDATION AT ARG-9</scope>
    <source>
        <tissue evidence="1">Antennal lobe</tissue>
    </source>
</reference>
<proteinExistence type="evidence at protein level"/>
<organism>
    <name type="scientific">Pentatoma rufipes</name>
    <name type="common">Forest bug</name>
    <name type="synonym">Cimex rufipes</name>
    <dbReference type="NCBI Taxonomy" id="286670"/>
    <lineage>
        <taxon>Eukaryota</taxon>
        <taxon>Metazoa</taxon>
        <taxon>Ecdysozoa</taxon>
        <taxon>Arthropoda</taxon>
        <taxon>Hexapoda</taxon>
        <taxon>Insecta</taxon>
        <taxon>Pterygota</taxon>
        <taxon>Neoptera</taxon>
        <taxon>Paraneoptera</taxon>
        <taxon>Hemiptera</taxon>
        <taxon>Heteroptera</taxon>
        <taxon>Panheteroptera</taxon>
        <taxon>Pentatomomorpha</taxon>
        <taxon>Pentatomoidea</taxon>
        <taxon>Pentatomidae</taxon>
        <taxon>Pentatominae</taxon>
        <taxon>Pentatoma</taxon>
    </lineage>
</organism>
<comment type="subcellular location">
    <subcellularLocation>
        <location evidence="1 3">Secreted</location>
    </subcellularLocation>
</comment>
<comment type="tissue specificity">
    <text evidence="1">Expressed in the antennal lobe (at protein level).</text>
</comment>
<name>TRP1_PENRU</name>
<dbReference type="GO" id="GO:0005576">
    <property type="term" value="C:extracellular region"/>
    <property type="evidence" value="ECO:0007005"/>
    <property type="project" value="UniProtKB"/>
</dbReference>
<dbReference type="GO" id="GO:0007218">
    <property type="term" value="P:neuropeptide signaling pathway"/>
    <property type="evidence" value="ECO:0007669"/>
    <property type="project" value="UniProtKB-KW"/>
</dbReference>
<keyword id="KW-0027">Amidation</keyword>
<keyword id="KW-0903">Direct protein sequencing</keyword>
<keyword id="KW-0527">Neuropeptide</keyword>
<keyword id="KW-0964">Secreted</keyword>